<reference key="1">
    <citation type="journal article" date="2001" name="Nature">
        <title>Complete genome sequence of a multiple drug resistant Salmonella enterica serovar Typhi CT18.</title>
        <authorList>
            <person name="Parkhill J."/>
            <person name="Dougan G."/>
            <person name="James K.D."/>
            <person name="Thomson N.R."/>
            <person name="Pickard D."/>
            <person name="Wain J."/>
            <person name="Churcher C.M."/>
            <person name="Mungall K.L."/>
            <person name="Bentley S.D."/>
            <person name="Holden M.T.G."/>
            <person name="Sebaihia M."/>
            <person name="Baker S."/>
            <person name="Basham D."/>
            <person name="Brooks K."/>
            <person name="Chillingworth T."/>
            <person name="Connerton P."/>
            <person name="Cronin A."/>
            <person name="Davis P."/>
            <person name="Davies R.M."/>
            <person name="Dowd L."/>
            <person name="White N."/>
            <person name="Farrar J."/>
            <person name="Feltwell T."/>
            <person name="Hamlin N."/>
            <person name="Haque A."/>
            <person name="Hien T.T."/>
            <person name="Holroyd S."/>
            <person name="Jagels K."/>
            <person name="Krogh A."/>
            <person name="Larsen T.S."/>
            <person name="Leather S."/>
            <person name="Moule S."/>
            <person name="O'Gaora P."/>
            <person name="Parry C."/>
            <person name="Quail M.A."/>
            <person name="Rutherford K.M."/>
            <person name="Simmonds M."/>
            <person name="Skelton J."/>
            <person name="Stevens K."/>
            <person name="Whitehead S."/>
            <person name="Barrell B.G."/>
        </authorList>
    </citation>
    <scope>NUCLEOTIDE SEQUENCE [LARGE SCALE GENOMIC DNA]</scope>
    <source>
        <strain>CT18</strain>
    </source>
</reference>
<reference key="2">
    <citation type="journal article" date="2003" name="J. Bacteriol.">
        <title>Comparative genomics of Salmonella enterica serovar Typhi strains Ty2 and CT18.</title>
        <authorList>
            <person name="Deng W."/>
            <person name="Liou S.-R."/>
            <person name="Plunkett G. III"/>
            <person name="Mayhew G.F."/>
            <person name="Rose D.J."/>
            <person name="Burland V."/>
            <person name="Kodoyianni V."/>
            <person name="Schwartz D.C."/>
            <person name="Blattner F.R."/>
        </authorList>
    </citation>
    <scope>NUCLEOTIDE SEQUENCE [LARGE SCALE GENOMIC DNA]</scope>
    <source>
        <strain>ATCC 700931 / Ty2</strain>
    </source>
</reference>
<sequence>MFQLSVQDIHPGEQVGNKEEAIRQIAAALAQAGNVAGGYVDGMLAREQQTSTFLGNGIAIPHGTTDTRDQVLKTGVQVFQFPQGVTWGEGQVAYVAIGIAASSDEHLGLLRQLTHVLSDDSVAEQLKSATTAEELRALLMGEKQSEQLKLDNETMTLDVIASSLVTLQALNAARLKEAGAVDAAFVAKTINDSPMNLGQGIWLNDSAEGNLRSAVAVSRATQAFDVEGEKAALLVTVAMNDEQPIAVLKRLGDLLLNNKADRLLSADAATLLALLTSDDALTDDVLSAEFVVRNEHGLHARPGTMLVNTIKQFNSEITVTNLDGTGKPANGRSLMKVVALGVKKGHRLRFTAQGEDAEQALKAIGDAIAAGLGEGA</sequence>
<comment type="function">
    <text evidence="1">The phosphoenolpyruvate-dependent sugar phosphotransferase system (sugar PTS), a major carbohydrate active transport system, catalyzes the phosphorylation of incoming sugar substrates concomitantly with their translocation across the cell membrane. The enzyme II FruAB PTS system is involved in fructose transport.</text>
</comment>
<comment type="subcellular location">
    <subcellularLocation>
        <location evidence="6">Cytoplasm</location>
    </subcellularLocation>
</comment>
<comment type="induction">
    <text evidence="1">Induced by fructose and repressed by FruR.</text>
</comment>
<comment type="domain">
    <text evidence="4">The PTS EIIA type-2 domain is phosphorylated by phospho-HPr on a histidyl residue. Then, it transfers the phosphoryl group to the PTS EIIB type-2 domain.</text>
</comment>
<comment type="domain">
    <text evidence="1">In contrast to classical PTS systems, the fructose-specific PTS has no requirement for HPr; FruB combines a IIA domain with a HPr domain.</text>
</comment>
<gene>
    <name type="primary">fruB</name>
    <name type="ordered locus">STY2442</name>
    <name type="ordered locus">t0650</name>
</gene>
<name>PTFAH_SALTI</name>
<keyword id="KW-0963">Cytoplasm</keyword>
<keyword id="KW-0418">Kinase</keyword>
<keyword id="KW-0597">Phosphoprotein</keyword>
<keyword id="KW-0598">Phosphotransferase system</keyword>
<keyword id="KW-0762">Sugar transport</keyword>
<keyword id="KW-0808">Transferase</keyword>
<keyword id="KW-0813">Transport</keyword>
<organism>
    <name type="scientific">Salmonella typhi</name>
    <dbReference type="NCBI Taxonomy" id="90370"/>
    <lineage>
        <taxon>Bacteria</taxon>
        <taxon>Pseudomonadati</taxon>
        <taxon>Pseudomonadota</taxon>
        <taxon>Gammaproteobacteria</taxon>
        <taxon>Enterobacterales</taxon>
        <taxon>Enterobacteriaceae</taxon>
        <taxon>Salmonella</taxon>
    </lineage>
</organism>
<accession>Q8Z591</accession>
<proteinExistence type="inferred from homology"/>
<dbReference type="EMBL" id="AL513382">
    <property type="protein sequence ID" value="CAD02588.1"/>
    <property type="molecule type" value="Genomic_DNA"/>
</dbReference>
<dbReference type="EMBL" id="AE014613">
    <property type="protein sequence ID" value="AAO68350.1"/>
    <property type="molecule type" value="Genomic_DNA"/>
</dbReference>
<dbReference type="RefSeq" id="NP_456764.1">
    <property type="nucleotide sequence ID" value="NC_003198.1"/>
</dbReference>
<dbReference type="RefSeq" id="WP_000487294.1">
    <property type="nucleotide sequence ID" value="NZ_PZMG01000001.1"/>
</dbReference>
<dbReference type="SMR" id="Q8Z591"/>
<dbReference type="STRING" id="220341.gene:17586343"/>
<dbReference type="KEGG" id="stt:t0650"/>
<dbReference type="KEGG" id="sty:STY2442"/>
<dbReference type="PATRIC" id="fig|220341.7.peg.2468"/>
<dbReference type="eggNOG" id="COG1925">
    <property type="taxonomic scope" value="Bacteria"/>
</dbReference>
<dbReference type="eggNOG" id="COG4668">
    <property type="taxonomic scope" value="Bacteria"/>
</dbReference>
<dbReference type="HOGENOM" id="CLU_046384_0_0_6"/>
<dbReference type="OMA" id="WGEGNIA"/>
<dbReference type="Proteomes" id="UP000000541">
    <property type="component" value="Chromosome"/>
</dbReference>
<dbReference type="Proteomes" id="UP000002670">
    <property type="component" value="Chromosome"/>
</dbReference>
<dbReference type="GO" id="GO:0005737">
    <property type="term" value="C:cytoplasm"/>
    <property type="evidence" value="ECO:0007669"/>
    <property type="project" value="UniProtKB-SubCell"/>
</dbReference>
<dbReference type="GO" id="GO:0005886">
    <property type="term" value="C:plasma membrane"/>
    <property type="evidence" value="ECO:0007669"/>
    <property type="project" value="TreeGrafter"/>
</dbReference>
<dbReference type="GO" id="GO:0016301">
    <property type="term" value="F:kinase activity"/>
    <property type="evidence" value="ECO:0007669"/>
    <property type="project" value="UniProtKB-KW"/>
</dbReference>
<dbReference type="GO" id="GO:0090563">
    <property type="term" value="F:protein-phosphocysteine-sugar phosphotransferase activity"/>
    <property type="evidence" value="ECO:0007669"/>
    <property type="project" value="TreeGrafter"/>
</dbReference>
<dbReference type="GO" id="GO:0009401">
    <property type="term" value="P:phosphoenolpyruvate-dependent sugar phosphotransferase system"/>
    <property type="evidence" value="ECO:0007669"/>
    <property type="project" value="UniProtKB-KW"/>
</dbReference>
<dbReference type="CDD" id="cd00367">
    <property type="entry name" value="PTS-HPr_like"/>
    <property type="match status" value="1"/>
</dbReference>
<dbReference type="CDD" id="cd00211">
    <property type="entry name" value="PTS_IIA_fru"/>
    <property type="match status" value="1"/>
</dbReference>
<dbReference type="FunFam" id="3.30.1340.10:FF:000005">
    <property type="entry name" value="Fructose-specific PTS system IIA component"/>
    <property type="match status" value="1"/>
</dbReference>
<dbReference type="FunFam" id="3.40.930.10:FF:000006">
    <property type="entry name" value="Fructose-specific PTS system IIA component"/>
    <property type="match status" value="1"/>
</dbReference>
<dbReference type="Gene3D" id="3.30.1340.10">
    <property type="entry name" value="HPr-like"/>
    <property type="match status" value="1"/>
</dbReference>
<dbReference type="Gene3D" id="3.40.930.10">
    <property type="entry name" value="Mannitol-specific EII, Chain A"/>
    <property type="match status" value="1"/>
</dbReference>
<dbReference type="InterPro" id="IPR000032">
    <property type="entry name" value="HPr-like"/>
</dbReference>
<dbReference type="InterPro" id="IPR035895">
    <property type="entry name" value="HPr-like_sf"/>
</dbReference>
<dbReference type="InterPro" id="IPR016152">
    <property type="entry name" value="PTrfase/Anion_transptr"/>
</dbReference>
<dbReference type="InterPro" id="IPR002178">
    <property type="entry name" value="PTS_EIIA_type-2_dom"/>
</dbReference>
<dbReference type="InterPro" id="IPR001020">
    <property type="entry name" value="PTS_HPr_His_P_site"/>
</dbReference>
<dbReference type="InterPro" id="IPR002114">
    <property type="entry name" value="PTS_HPr_Ser_P_site"/>
</dbReference>
<dbReference type="InterPro" id="IPR050893">
    <property type="entry name" value="Sugar_PTS"/>
</dbReference>
<dbReference type="NCBIfam" id="NF008319">
    <property type="entry name" value="PRK11109.1"/>
    <property type="match status" value="1"/>
</dbReference>
<dbReference type="NCBIfam" id="TIGR01003">
    <property type="entry name" value="PTS_HPr_family"/>
    <property type="match status" value="1"/>
</dbReference>
<dbReference type="PANTHER" id="PTHR30181">
    <property type="entry name" value="MANNITOL PERMEASE IIC COMPONENT"/>
    <property type="match status" value="1"/>
</dbReference>
<dbReference type="PANTHER" id="PTHR30181:SF3">
    <property type="entry name" value="MULTIPHOSPHORYL TRANSFER PROTEIN"/>
    <property type="match status" value="1"/>
</dbReference>
<dbReference type="Pfam" id="PF00381">
    <property type="entry name" value="PTS-HPr"/>
    <property type="match status" value="1"/>
</dbReference>
<dbReference type="Pfam" id="PF00359">
    <property type="entry name" value="PTS_EIIA_2"/>
    <property type="match status" value="1"/>
</dbReference>
<dbReference type="PRINTS" id="PR00107">
    <property type="entry name" value="PHOSPHOCPHPR"/>
</dbReference>
<dbReference type="SUPFAM" id="SSF55594">
    <property type="entry name" value="HPr-like"/>
    <property type="match status" value="1"/>
</dbReference>
<dbReference type="SUPFAM" id="SSF55804">
    <property type="entry name" value="Phoshotransferase/anion transport protein"/>
    <property type="match status" value="2"/>
</dbReference>
<dbReference type="PROSITE" id="PS51094">
    <property type="entry name" value="PTS_EIIA_TYPE_2"/>
    <property type="match status" value="1"/>
</dbReference>
<dbReference type="PROSITE" id="PS00372">
    <property type="entry name" value="PTS_EIIA_TYPE_2_HIS"/>
    <property type="match status" value="1"/>
</dbReference>
<dbReference type="PROSITE" id="PS51350">
    <property type="entry name" value="PTS_HPR_DOM"/>
    <property type="match status" value="1"/>
</dbReference>
<dbReference type="PROSITE" id="PS00369">
    <property type="entry name" value="PTS_HPR_HIS"/>
    <property type="match status" value="1"/>
</dbReference>
<dbReference type="PROSITE" id="PS00589">
    <property type="entry name" value="PTS_HPR_SER"/>
    <property type="match status" value="1"/>
</dbReference>
<feature type="chain" id="PRO_0000186518" description="Multiphosphoryl transfer protein">
    <location>
        <begin position="1"/>
        <end position="376"/>
    </location>
</feature>
<feature type="domain" description="PTS EIIA type-2" evidence="4">
    <location>
        <begin position="2"/>
        <end position="142"/>
    </location>
</feature>
<feature type="domain" description="HPr" evidence="5">
    <location>
        <begin position="285"/>
        <end position="375"/>
    </location>
</feature>
<feature type="region of interest" description="M domain" evidence="2">
    <location>
        <begin position="156"/>
        <end position="284"/>
    </location>
</feature>
<feature type="active site" description="Tele-phosphohistidine intermediate; for EIIA activity" evidence="4">
    <location>
        <position position="62"/>
    </location>
</feature>
<feature type="active site" description="Pros-phosphohistidine intermediate; for HPr activity" evidence="5">
    <location>
        <position position="299"/>
    </location>
</feature>
<feature type="modified residue" description="Phosphohistidine; by HPr" evidence="6">
    <location>
        <position position="62"/>
    </location>
</feature>
<feature type="modified residue" description="Phosphohistidine; by EI" evidence="6">
    <location>
        <position position="299"/>
    </location>
</feature>
<feature type="sequence conflict" description="In Ref. 2; AAO68350." evidence="6" ref="2">
    <original>V</original>
    <variation>A</variation>
    <location>
        <position position="15"/>
    </location>
</feature>
<protein>
    <recommendedName>
        <fullName evidence="2">Multiphosphoryl transfer protein</fullName>
        <shortName evidence="2">MTP</shortName>
    </recommendedName>
    <alternativeName>
        <fullName evidence="3">Diphosphoryl transfer protein</fullName>
        <shortName evidence="3">DTP</shortName>
    </alternativeName>
    <alternativeName>
        <fullName evidence="1">Phosphotransferase FPr protein</fullName>
    </alternativeName>
    <alternativeName>
        <fullName evidence="1">Pseudo-HPr</fullName>
    </alternativeName>
    <domain>
        <recommendedName>
            <fullName evidence="1">Phosphocarrier protein HPr</fullName>
            <shortName evidence="1">Protein H</shortName>
        </recommendedName>
    </domain>
    <domain>
        <recommendedName>
            <fullName evidence="1">PTS system fructose-specific EIIA component</fullName>
        </recommendedName>
        <alternativeName>
            <fullName evidence="1">EIIA-Fru</fullName>
        </alternativeName>
        <alternativeName>
            <fullName evidence="1">EIII-Fru</fullName>
        </alternativeName>
        <alternativeName>
            <fullName evidence="1">Fructose-specific phosphotransferase enzyme IIA component</fullName>
        </alternativeName>
    </domain>
</protein>
<evidence type="ECO:0000250" key="1">
    <source>
        <dbReference type="UniProtKB" id="P17127"/>
    </source>
</evidence>
<evidence type="ECO:0000250" key="2">
    <source>
        <dbReference type="UniProtKB" id="P44715"/>
    </source>
</evidence>
<evidence type="ECO:0000250" key="3">
    <source>
        <dbReference type="UniProtKB" id="P69811"/>
    </source>
</evidence>
<evidence type="ECO:0000255" key="4">
    <source>
        <dbReference type="PROSITE-ProRule" id="PRU00417"/>
    </source>
</evidence>
<evidence type="ECO:0000255" key="5">
    <source>
        <dbReference type="PROSITE-ProRule" id="PRU00681"/>
    </source>
</evidence>
<evidence type="ECO:0000305" key="6"/>